<accession>Q6CNN5</accession>
<feature type="chain" id="PRO_0000280673" description="Coupling of ubiquitin conjugation to ER degradation protein 1">
    <location>
        <begin position="1"/>
        <end position="218"/>
    </location>
</feature>
<feature type="topological domain" description="Lumenal" evidence="1">
    <location>
        <begin position="1"/>
        <end position="4"/>
    </location>
</feature>
<feature type="transmembrane region" description="Helical" evidence="2">
    <location>
        <begin position="5"/>
        <end position="25"/>
    </location>
</feature>
<feature type="topological domain" description="Cytoplasmic" evidence="1">
    <location>
        <begin position="26"/>
        <end position="218"/>
    </location>
</feature>
<feature type="domain" description="CUE" evidence="3">
    <location>
        <begin position="69"/>
        <end position="111"/>
    </location>
</feature>
<feature type="region of interest" description="Disordered" evidence="4">
    <location>
        <begin position="35"/>
        <end position="65"/>
    </location>
</feature>
<feature type="region of interest" description="Disordered" evidence="4">
    <location>
        <begin position="105"/>
        <end position="160"/>
    </location>
</feature>
<feature type="compositionally biased region" description="Low complexity" evidence="4">
    <location>
        <begin position="39"/>
        <end position="59"/>
    </location>
</feature>
<feature type="compositionally biased region" description="Low complexity" evidence="4">
    <location>
        <begin position="121"/>
        <end position="153"/>
    </location>
</feature>
<dbReference type="EMBL" id="CR382125">
    <property type="protein sequence ID" value="CAG99541.1"/>
    <property type="molecule type" value="Genomic_DNA"/>
</dbReference>
<dbReference type="RefSeq" id="XP_454454.1">
    <property type="nucleotide sequence ID" value="XM_454454.1"/>
</dbReference>
<dbReference type="SMR" id="Q6CNN5"/>
<dbReference type="FunCoup" id="Q6CNN5">
    <property type="interactions" value="118"/>
</dbReference>
<dbReference type="STRING" id="284590.Q6CNN5"/>
<dbReference type="PaxDb" id="284590-Q6CNN5"/>
<dbReference type="KEGG" id="kla:KLLA0_E11199g"/>
<dbReference type="eggNOG" id="ENOG502S35Z">
    <property type="taxonomic scope" value="Eukaryota"/>
</dbReference>
<dbReference type="HOGENOM" id="CLU_115919_0_0_1"/>
<dbReference type="InParanoid" id="Q6CNN5"/>
<dbReference type="OMA" id="TVNRFME"/>
<dbReference type="Proteomes" id="UP000000598">
    <property type="component" value="Chromosome E"/>
</dbReference>
<dbReference type="GO" id="GO:0005789">
    <property type="term" value="C:endoplasmic reticulum membrane"/>
    <property type="evidence" value="ECO:0007669"/>
    <property type="project" value="UniProtKB-SubCell"/>
</dbReference>
<dbReference type="GO" id="GO:0043130">
    <property type="term" value="F:ubiquitin binding"/>
    <property type="evidence" value="ECO:0007669"/>
    <property type="project" value="InterPro"/>
</dbReference>
<dbReference type="CDD" id="cd14424">
    <property type="entry name" value="CUE_Cue1p_like"/>
    <property type="match status" value="1"/>
</dbReference>
<dbReference type="FunFam" id="1.10.8.10:FF:000050">
    <property type="entry name" value="Related to AMFR protein"/>
    <property type="match status" value="1"/>
</dbReference>
<dbReference type="Gene3D" id="1.10.287.4310">
    <property type="match status" value="1"/>
</dbReference>
<dbReference type="Gene3D" id="1.10.8.10">
    <property type="entry name" value="DNA helicase RuvA subunit, C-terminal domain"/>
    <property type="match status" value="1"/>
</dbReference>
<dbReference type="InterPro" id="IPR003892">
    <property type="entry name" value="CUE"/>
</dbReference>
<dbReference type="InterPro" id="IPR041158">
    <property type="entry name" value="Cue1_U7BR"/>
</dbReference>
<dbReference type="Pfam" id="PF02845">
    <property type="entry name" value="CUE"/>
    <property type="match status" value="1"/>
</dbReference>
<dbReference type="Pfam" id="PF18499">
    <property type="entry name" value="Cue1_U7BR"/>
    <property type="match status" value="1"/>
</dbReference>
<dbReference type="SMART" id="SM00546">
    <property type="entry name" value="CUE"/>
    <property type="match status" value="1"/>
</dbReference>
<dbReference type="PROSITE" id="PS51140">
    <property type="entry name" value="CUE"/>
    <property type="match status" value="1"/>
</dbReference>
<evidence type="ECO:0000250" key="1"/>
<evidence type="ECO:0000255" key="2"/>
<evidence type="ECO:0000255" key="3">
    <source>
        <dbReference type="PROSITE-ProRule" id="PRU00468"/>
    </source>
</evidence>
<evidence type="ECO:0000256" key="4">
    <source>
        <dbReference type="SAM" id="MobiDB-lite"/>
    </source>
</evidence>
<evidence type="ECO:0000305" key="5"/>
<reference key="1">
    <citation type="journal article" date="2004" name="Nature">
        <title>Genome evolution in yeasts.</title>
        <authorList>
            <person name="Dujon B."/>
            <person name="Sherman D."/>
            <person name="Fischer G."/>
            <person name="Durrens P."/>
            <person name="Casaregola S."/>
            <person name="Lafontaine I."/>
            <person name="de Montigny J."/>
            <person name="Marck C."/>
            <person name="Neuveglise C."/>
            <person name="Talla E."/>
            <person name="Goffard N."/>
            <person name="Frangeul L."/>
            <person name="Aigle M."/>
            <person name="Anthouard V."/>
            <person name="Babour A."/>
            <person name="Barbe V."/>
            <person name="Barnay S."/>
            <person name="Blanchin S."/>
            <person name="Beckerich J.-M."/>
            <person name="Beyne E."/>
            <person name="Bleykasten C."/>
            <person name="Boisrame A."/>
            <person name="Boyer J."/>
            <person name="Cattolico L."/>
            <person name="Confanioleri F."/>
            <person name="de Daruvar A."/>
            <person name="Despons L."/>
            <person name="Fabre E."/>
            <person name="Fairhead C."/>
            <person name="Ferry-Dumazet H."/>
            <person name="Groppi A."/>
            <person name="Hantraye F."/>
            <person name="Hennequin C."/>
            <person name="Jauniaux N."/>
            <person name="Joyet P."/>
            <person name="Kachouri R."/>
            <person name="Kerrest A."/>
            <person name="Koszul R."/>
            <person name="Lemaire M."/>
            <person name="Lesur I."/>
            <person name="Ma L."/>
            <person name="Muller H."/>
            <person name="Nicaud J.-M."/>
            <person name="Nikolski M."/>
            <person name="Oztas S."/>
            <person name="Ozier-Kalogeropoulos O."/>
            <person name="Pellenz S."/>
            <person name="Potier S."/>
            <person name="Richard G.-F."/>
            <person name="Straub M.-L."/>
            <person name="Suleau A."/>
            <person name="Swennen D."/>
            <person name="Tekaia F."/>
            <person name="Wesolowski-Louvel M."/>
            <person name="Westhof E."/>
            <person name="Wirth B."/>
            <person name="Zeniou-Meyer M."/>
            <person name="Zivanovic Y."/>
            <person name="Bolotin-Fukuhara M."/>
            <person name="Thierry A."/>
            <person name="Bouchier C."/>
            <person name="Caudron B."/>
            <person name="Scarpelli C."/>
            <person name="Gaillardin C."/>
            <person name="Weissenbach J."/>
            <person name="Wincker P."/>
            <person name="Souciet J.-L."/>
        </authorList>
    </citation>
    <scope>NUCLEOTIDE SEQUENCE [LARGE SCALE GENOMIC DNA]</scope>
    <source>
        <strain>ATCC 8585 / CBS 2359 / DSM 70799 / NBRC 1267 / NRRL Y-1140 / WM37</strain>
    </source>
</reference>
<protein>
    <recommendedName>
        <fullName>Coupling of ubiquitin conjugation to ER degradation protein 1</fullName>
    </recommendedName>
</protein>
<sequence length="218" mass="24368">MADQSFTLFIILAIAGYIAVKWFLSNNEQHPSIQINGFSSQSDSATASGTAASSNAASRQTRRRIRRRVNDDMIEVVQSLAPHLHPEQIRYDLEQTGSVETTVERYLSGRDMPFPPDYVPESETGGNSSNGQNQSTGSSVTTGNNTNNNSTSTDPRKRSNIKADNLLKKFNVDPQEDLSNLNPNDLSIEERKRLMVWQARKSMELKVENSEYLQSLLK</sequence>
<gene>
    <name type="primary">CUE1</name>
    <name type="ordered locus">KLLA0E11165g</name>
</gene>
<organism>
    <name type="scientific">Kluyveromyces lactis (strain ATCC 8585 / CBS 2359 / DSM 70799 / NBRC 1267 / NRRL Y-1140 / WM37)</name>
    <name type="common">Yeast</name>
    <name type="synonym">Candida sphaerica</name>
    <dbReference type="NCBI Taxonomy" id="284590"/>
    <lineage>
        <taxon>Eukaryota</taxon>
        <taxon>Fungi</taxon>
        <taxon>Dikarya</taxon>
        <taxon>Ascomycota</taxon>
        <taxon>Saccharomycotina</taxon>
        <taxon>Saccharomycetes</taxon>
        <taxon>Saccharomycetales</taxon>
        <taxon>Saccharomycetaceae</taxon>
        <taxon>Kluyveromyces</taxon>
    </lineage>
</organism>
<name>CUE1_KLULA</name>
<keyword id="KW-0256">Endoplasmic reticulum</keyword>
<keyword id="KW-0472">Membrane</keyword>
<keyword id="KW-1185">Reference proteome</keyword>
<keyword id="KW-0812">Transmembrane</keyword>
<keyword id="KW-1133">Transmembrane helix</keyword>
<keyword id="KW-0833">Ubl conjugation pathway</keyword>
<proteinExistence type="inferred from homology"/>
<comment type="function">
    <text evidence="1">Component of the endoplasmic reticulum-associated protein degradation (ERAD) pathway. Recruits the soluble ubiquitin-conjugating enzyme UBC7 to the cytoplasmic face of the endoplasmic reticulum membrane where it functions in degradation of misfolded or regulated proteins localized in the endoplasmic reticulum (ER) lumen or membrane via the ubiquitin-proteasome system. Targets the E2 conjugating enzyme UBC7 to the DOA10 ubiquitin ligase complex, which is part of the ERAD-C pathway responsible for the rapid degradation of membrane proteins with misfolded cytoplasmic domains, and to the HRD1 ubiquitin ligase complex, which is part of the ERAD-L and ERAD-M pathways responsible for the rapid degradation of soluble lumenal and membrane proteins with misfolded lumenal domains (ERAD-L), or ER-membrane proteins with misfolded transmembrane domains (ERAD-M) (By similarity).</text>
</comment>
<comment type="subunit">
    <text evidence="1">Forms a heterodimer with UBC7.</text>
</comment>
<comment type="subcellular location">
    <subcellularLocation>
        <location evidence="1">Endoplasmic reticulum membrane</location>
        <topology evidence="1">Single-pass membrane protein</topology>
    </subcellularLocation>
</comment>
<comment type="similarity">
    <text evidence="5">Belongs to the CUE1 family.</text>
</comment>